<dbReference type="EC" id="2.8.1.6" evidence="1"/>
<dbReference type="EMBL" id="CP000097">
    <property type="protein sequence ID" value="ABB26358.1"/>
    <property type="molecule type" value="Genomic_DNA"/>
</dbReference>
<dbReference type="RefSeq" id="WP_011360181.1">
    <property type="nucleotide sequence ID" value="NC_007513.1"/>
</dbReference>
<dbReference type="SMR" id="Q3AX82"/>
<dbReference type="STRING" id="316279.Syncc9902_1394"/>
<dbReference type="KEGG" id="sye:Syncc9902_1394"/>
<dbReference type="eggNOG" id="COG0502">
    <property type="taxonomic scope" value="Bacteria"/>
</dbReference>
<dbReference type="HOGENOM" id="CLU_033172_1_2_3"/>
<dbReference type="OrthoDB" id="9786826at2"/>
<dbReference type="UniPathway" id="UPA00078">
    <property type="reaction ID" value="UER00162"/>
</dbReference>
<dbReference type="Proteomes" id="UP000002712">
    <property type="component" value="Chromosome"/>
</dbReference>
<dbReference type="GO" id="GO:0051537">
    <property type="term" value="F:2 iron, 2 sulfur cluster binding"/>
    <property type="evidence" value="ECO:0007669"/>
    <property type="project" value="UniProtKB-KW"/>
</dbReference>
<dbReference type="GO" id="GO:0051539">
    <property type="term" value="F:4 iron, 4 sulfur cluster binding"/>
    <property type="evidence" value="ECO:0007669"/>
    <property type="project" value="UniProtKB-KW"/>
</dbReference>
<dbReference type="GO" id="GO:0004076">
    <property type="term" value="F:biotin synthase activity"/>
    <property type="evidence" value="ECO:0007669"/>
    <property type="project" value="UniProtKB-UniRule"/>
</dbReference>
<dbReference type="GO" id="GO:0005506">
    <property type="term" value="F:iron ion binding"/>
    <property type="evidence" value="ECO:0007669"/>
    <property type="project" value="UniProtKB-UniRule"/>
</dbReference>
<dbReference type="GO" id="GO:0009102">
    <property type="term" value="P:biotin biosynthetic process"/>
    <property type="evidence" value="ECO:0007669"/>
    <property type="project" value="UniProtKB-UniRule"/>
</dbReference>
<dbReference type="CDD" id="cd01335">
    <property type="entry name" value="Radical_SAM"/>
    <property type="match status" value="1"/>
</dbReference>
<dbReference type="Gene3D" id="3.20.20.70">
    <property type="entry name" value="Aldolase class I"/>
    <property type="match status" value="1"/>
</dbReference>
<dbReference type="HAMAP" id="MF_01694">
    <property type="entry name" value="BioB"/>
    <property type="match status" value="1"/>
</dbReference>
<dbReference type="InterPro" id="IPR013785">
    <property type="entry name" value="Aldolase_TIM"/>
</dbReference>
<dbReference type="InterPro" id="IPR010722">
    <property type="entry name" value="BATS_dom"/>
</dbReference>
<dbReference type="InterPro" id="IPR002684">
    <property type="entry name" value="Biotin_synth/BioAB"/>
</dbReference>
<dbReference type="InterPro" id="IPR024177">
    <property type="entry name" value="Biotin_synthase"/>
</dbReference>
<dbReference type="InterPro" id="IPR006638">
    <property type="entry name" value="Elp3/MiaA/NifB-like_rSAM"/>
</dbReference>
<dbReference type="InterPro" id="IPR007197">
    <property type="entry name" value="rSAM"/>
</dbReference>
<dbReference type="NCBIfam" id="TIGR00433">
    <property type="entry name" value="bioB"/>
    <property type="match status" value="1"/>
</dbReference>
<dbReference type="PANTHER" id="PTHR22976">
    <property type="entry name" value="BIOTIN SYNTHASE"/>
    <property type="match status" value="1"/>
</dbReference>
<dbReference type="PANTHER" id="PTHR22976:SF2">
    <property type="entry name" value="BIOTIN SYNTHASE, MITOCHONDRIAL"/>
    <property type="match status" value="1"/>
</dbReference>
<dbReference type="Pfam" id="PF06968">
    <property type="entry name" value="BATS"/>
    <property type="match status" value="1"/>
</dbReference>
<dbReference type="Pfam" id="PF04055">
    <property type="entry name" value="Radical_SAM"/>
    <property type="match status" value="1"/>
</dbReference>
<dbReference type="PIRSF" id="PIRSF001619">
    <property type="entry name" value="Biotin_synth"/>
    <property type="match status" value="1"/>
</dbReference>
<dbReference type="SFLD" id="SFLDF00272">
    <property type="entry name" value="biotin_synthase"/>
    <property type="match status" value="1"/>
</dbReference>
<dbReference type="SFLD" id="SFLDS00029">
    <property type="entry name" value="Radical_SAM"/>
    <property type="match status" value="1"/>
</dbReference>
<dbReference type="SMART" id="SM00876">
    <property type="entry name" value="BATS"/>
    <property type="match status" value="1"/>
</dbReference>
<dbReference type="SMART" id="SM00729">
    <property type="entry name" value="Elp3"/>
    <property type="match status" value="1"/>
</dbReference>
<dbReference type="SUPFAM" id="SSF102114">
    <property type="entry name" value="Radical SAM enzymes"/>
    <property type="match status" value="1"/>
</dbReference>
<dbReference type="PROSITE" id="PS51918">
    <property type="entry name" value="RADICAL_SAM"/>
    <property type="match status" value="1"/>
</dbReference>
<organism>
    <name type="scientific">Synechococcus sp. (strain CC9902)</name>
    <dbReference type="NCBI Taxonomy" id="316279"/>
    <lineage>
        <taxon>Bacteria</taxon>
        <taxon>Bacillati</taxon>
        <taxon>Cyanobacteriota</taxon>
        <taxon>Cyanophyceae</taxon>
        <taxon>Synechococcales</taxon>
        <taxon>Synechococcaceae</taxon>
        <taxon>Synechococcus</taxon>
    </lineage>
</organism>
<comment type="function">
    <text evidence="1">Catalyzes the conversion of dethiobiotin (DTB) to biotin by the insertion of a sulfur atom into dethiobiotin via a radical-based mechanism.</text>
</comment>
<comment type="catalytic activity">
    <reaction evidence="1">
        <text>(4R,5S)-dethiobiotin + (sulfur carrier)-SH + 2 reduced [2Fe-2S]-[ferredoxin] + 2 S-adenosyl-L-methionine = (sulfur carrier)-H + biotin + 2 5'-deoxyadenosine + 2 L-methionine + 2 oxidized [2Fe-2S]-[ferredoxin]</text>
        <dbReference type="Rhea" id="RHEA:22060"/>
        <dbReference type="Rhea" id="RHEA-COMP:10000"/>
        <dbReference type="Rhea" id="RHEA-COMP:10001"/>
        <dbReference type="Rhea" id="RHEA-COMP:14737"/>
        <dbReference type="Rhea" id="RHEA-COMP:14739"/>
        <dbReference type="ChEBI" id="CHEBI:17319"/>
        <dbReference type="ChEBI" id="CHEBI:29917"/>
        <dbReference type="ChEBI" id="CHEBI:33737"/>
        <dbReference type="ChEBI" id="CHEBI:33738"/>
        <dbReference type="ChEBI" id="CHEBI:57586"/>
        <dbReference type="ChEBI" id="CHEBI:57844"/>
        <dbReference type="ChEBI" id="CHEBI:59789"/>
        <dbReference type="ChEBI" id="CHEBI:64428"/>
        <dbReference type="ChEBI" id="CHEBI:149473"/>
        <dbReference type="EC" id="2.8.1.6"/>
    </reaction>
</comment>
<comment type="cofactor">
    <cofactor evidence="1">
        <name>[4Fe-4S] cluster</name>
        <dbReference type="ChEBI" id="CHEBI:49883"/>
    </cofactor>
    <text evidence="1">Binds 1 [4Fe-4S] cluster. The cluster is coordinated with 3 cysteines and an exchangeable S-adenosyl-L-methionine.</text>
</comment>
<comment type="cofactor">
    <cofactor evidence="1">
        <name>[2Fe-2S] cluster</name>
        <dbReference type="ChEBI" id="CHEBI:190135"/>
    </cofactor>
    <text evidence="1">Binds 1 [2Fe-2S] cluster. The cluster is coordinated with 3 cysteines and 1 arginine.</text>
</comment>
<comment type="pathway">
    <text evidence="1">Cofactor biosynthesis; biotin biosynthesis; biotin from 7,8-diaminononanoate: step 2/2.</text>
</comment>
<comment type="subunit">
    <text evidence="1">Homodimer.</text>
</comment>
<comment type="similarity">
    <text evidence="1">Belongs to the radical SAM superfamily. Biotin synthase family.</text>
</comment>
<proteinExistence type="inferred from homology"/>
<accession>Q3AX82</accession>
<evidence type="ECO:0000255" key="1">
    <source>
        <dbReference type="HAMAP-Rule" id="MF_01694"/>
    </source>
</evidence>
<evidence type="ECO:0000255" key="2">
    <source>
        <dbReference type="PROSITE-ProRule" id="PRU01266"/>
    </source>
</evidence>
<reference key="1">
    <citation type="submission" date="2005-08" db="EMBL/GenBank/DDBJ databases">
        <title>Complete sequence of Synechococcus sp. CC9902.</title>
        <authorList>
            <person name="Copeland A."/>
            <person name="Lucas S."/>
            <person name="Lapidus A."/>
            <person name="Barry K."/>
            <person name="Detter J.C."/>
            <person name="Glavina T."/>
            <person name="Hammon N."/>
            <person name="Israni S."/>
            <person name="Pitluck S."/>
            <person name="Martinez M."/>
            <person name="Schmutz J."/>
            <person name="Larimer F."/>
            <person name="Land M."/>
            <person name="Kyrpides N."/>
            <person name="Ivanova N."/>
            <person name="Richardson P."/>
        </authorList>
    </citation>
    <scope>NUCLEOTIDE SEQUENCE [LARGE SCALE GENOMIC DNA]</scope>
    <source>
        <strain>CC9902</strain>
    </source>
</reference>
<name>BIOB_SYNS9</name>
<feature type="chain" id="PRO_0000381681" description="Biotin synthase">
    <location>
        <begin position="1"/>
        <end position="333"/>
    </location>
</feature>
<feature type="domain" description="Radical SAM core" evidence="2">
    <location>
        <begin position="40"/>
        <end position="269"/>
    </location>
</feature>
<feature type="binding site" evidence="1">
    <location>
        <position position="55"/>
    </location>
    <ligand>
        <name>[4Fe-4S] cluster</name>
        <dbReference type="ChEBI" id="CHEBI:49883"/>
        <note>4Fe-4S-S-AdoMet</note>
    </ligand>
</feature>
<feature type="binding site" evidence="1">
    <location>
        <position position="59"/>
    </location>
    <ligand>
        <name>[4Fe-4S] cluster</name>
        <dbReference type="ChEBI" id="CHEBI:49883"/>
        <note>4Fe-4S-S-AdoMet</note>
    </ligand>
</feature>
<feature type="binding site" evidence="1">
    <location>
        <position position="62"/>
    </location>
    <ligand>
        <name>[4Fe-4S] cluster</name>
        <dbReference type="ChEBI" id="CHEBI:49883"/>
        <note>4Fe-4S-S-AdoMet</note>
    </ligand>
</feature>
<feature type="binding site" evidence="1">
    <location>
        <position position="100"/>
    </location>
    <ligand>
        <name>[2Fe-2S] cluster</name>
        <dbReference type="ChEBI" id="CHEBI:190135"/>
    </ligand>
</feature>
<feature type="binding site" evidence="1">
    <location>
        <position position="132"/>
    </location>
    <ligand>
        <name>[2Fe-2S] cluster</name>
        <dbReference type="ChEBI" id="CHEBI:190135"/>
    </ligand>
</feature>
<feature type="binding site" evidence="1">
    <location>
        <position position="192"/>
    </location>
    <ligand>
        <name>[2Fe-2S] cluster</name>
        <dbReference type="ChEBI" id="CHEBI:190135"/>
    </ligand>
</feature>
<feature type="binding site" evidence="1">
    <location>
        <position position="264"/>
    </location>
    <ligand>
        <name>[2Fe-2S] cluster</name>
        <dbReference type="ChEBI" id="CHEBI:190135"/>
    </ligand>
</feature>
<sequence>MTITTRHDWTTEEIQTLLELPLMDLLWQAQTVHRDANPGYRVQLASLLSVKTGGCEEDCSYCSQSIHNSSDVSGFEAQMRVEPVLERARAAKEAGADRFCMGWAWREIRDGAQFEAMLEMVRGVRGMGMEACVTAGMLTDDQAGRLAEAGLTAYNHNLDTSPEHYEKIISTRTYEDRLETLQRVRKAGVTLCSGGIIGMGETLRDRASMLQVLASMNPHPESVPVNGLVAVEGTPLEEQQPFEPLELVRMVATARILMPHARVRLSAGREQLSREAQILCLQAGADSIFYGDLLLTTGNPDVEADRRLLADAGVQANWQENASSLAIKAPAST</sequence>
<keyword id="KW-0001">2Fe-2S</keyword>
<keyword id="KW-0004">4Fe-4S</keyword>
<keyword id="KW-0093">Biotin biosynthesis</keyword>
<keyword id="KW-0408">Iron</keyword>
<keyword id="KW-0411">Iron-sulfur</keyword>
<keyword id="KW-0479">Metal-binding</keyword>
<keyword id="KW-1185">Reference proteome</keyword>
<keyword id="KW-0949">S-adenosyl-L-methionine</keyword>
<keyword id="KW-0808">Transferase</keyword>
<protein>
    <recommendedName>
        <fullName evidence="1">Biotin synthase</fullName>
        <ecNumber evidence="1">2.8.1.6</ecNumber>
    </recommendedName>
</protein>
<gene>
    <name evidence="1" type="primary">bioB</name>
    <name type="ordered locus">Syncc9902_1394</name>
</gene>